<comment type="function">
    <text evidence="1">A type II topoisomerase that negatively supercoils closed circular double-stranded (ds) DNA in an ATP-dependent manner to modulate DNA topology and maintain chromosomes in an underwound state. Negative supercoiling favors strand separation, and DNA replication, transcription, recombination and repair, all of which involve strand separation. Also able to catalyze the interconversion of other topological isomers of dsDNA rings, including catenanes and knotted rings. Type II topoisomerases break and join 2 DNA strands simultaneously in an ATP-dependent manner.</text>
</comment>
<comment type="catalytic activity">
    <reaction evidence="1">
        <text>ATP-dependent breakage, passage and rejoining of double-stranded DNA.</text>
        <dbReference type="EC" id="5.6.2.2"/>
    </reaction>
</comment>
<comment type="cofactor">
    <cofactor evidence="1">
        <name>Mg(2+)</name>
        <dbReference type="ChEBI" id="CHEBI:18420"/>
    </cofactor>
    <cofactor evidence="1">
        <name>Mn(2+)</name>
        <dbReference type="ChEBI" id="CHEBI:29035"/>
    </cofactor>
    <cofactor evidence="1">
        <name>Ca(2+)</name>
        <dbReference type="ChEBI" id="CHEBI:29108"/>
    </cofactor>
    <text evidence="1">Binds two Mg(2+) per subunit. The magnesium ions form salt bridges with both the protein and the DNA. Can also accept other divalent metal cations, such as Mn(2+) or Ca(2+).</text>
</comment>
<comment type="subunit">
    <text evidence="1">Heterotetramer, composed of two GyrA and two GyrB chains. In the heterotetramer, GyrA contains the active site tyrosine that forms a transient covalent intermediate with DNA, while GyrB binds cofactors and catalyzes ATP hydrolysis.</text>
</comment>
<comment type="subcellular location">
    <subcellularLocation>
        <location evidence="1">Cytoplasm</location>
    </subcellularLocation>
</comment>
<comment type="miscellaneous">
    <text evidence="1">Few gyrases are as efficient as E.coli at forming negative supercoils. Not all organisms have 2 type II topoisomerases; in organisms with a single type II topoisomerase this enzyme also has to decatenate newly replicated chromosomes.</text>
</comment>
<comment type="similarity">
    <text evidence="1">Belongs to the type II topoisomerase GyrB family.</text>
</comment>
<proteinExistence type="inferred from homology"/>
<evidence type="ECO:0000255" key="1">
    <source>
        <dbReference type="HAMAP-Rule" id="MF_01898"/>
    </source>
</evidence>
<organism>
    <name type="scientific">Chlamydia muridarum (strain MoPn / Nigg)</name>
    <dbReference type="NCBI Taxonomy" id="243161"/>
    <lineage>
        <taxon>Bacteria</taxon>
        <taxon>Pseudomonadati</taxon>
        <taxon>Chlamydiota</taxon>
        <taxon>Chlamydiia</taxon>
        <taxon>Chlamydiales</taxon>
        <taxon>Chlamydiaceae</taxon>
        <taxon>Chlamydia/Chlamydophila group</taxon>
        <taxon>Chlamydia</taxon>
    </lineage>
</organism>
<keyword id="KW-0067">ATP-binding</keyword>
<keyword id="KW-0963">Cytoplasm</keyword>
<keyword id="KW-0238">DNA-binding</keyword>
<keyword id="KW-0413">Isomerase</keyword>
<keyword id="KW-0460">Magnesium</keyword>
<keyword id="KW-0479">Metal-binding</keyword>
<keyword id="KW-0547">Nucleotide-binding</keyword>
<keyword id="KW-0799">Topoisomerase</keyword>
<accession>Q9PKK3</accession>
<sequence length="804" mass="89584">MDAQEKKYDASAITVLEGLQAVRERPGMYIGDTGVTGLHHLVYEVVDNSIDEAMAGFCTEVVVRILEDGGISVSDNGRGIPVQIHEKESAKQGREISALEVVLTVLHAGGKFDKDSYKVSGGLHGVGVSCVNALSEKFIANVFKDGQAYSMEFSKGAPLTALQVLGSTDKRGTEILFYPDPTVFSTCVFDRAILMKRLRELAFLNRGITIIFEDDRDAGFDKVTFFYEGGIQSFVSYLNQNKESLFPTPIYIQGSKRGDDGDIEFEAALQWNSGYSELIYSYANNIPTRQGGTHLTGFSTALTRAVNSYIKSHNLAKSDKLSLTGEDIREGLVAIVSVKVPNPQFEGQTKQKLGNSDVGSVAQQISGEVLTTFFEENPQIAKTIVDKVFVAAQAREAAKRARELTIRKSALDSARLPGKLVDCLEKDPEKCEMYIVEGDSAGGSAKQGRDRRFQAILPIRGKILNVEKARLQKIFQNQEIGSIIAALGCGIGTDNFNLSKLRYKRVIIMTDADVDGSHIRTLLLTFFYRHMSALIENGCVYIAQPPLYRVSKKKDFRYILSEKEMDGYLLNLGTRESRVVFDDTARELEGTALESFVNLILEVESFIIALEKRAIPFSEFLDMFRDGAYPLYYYPPESGKQGGNYLYSNEEKEAAVAANEEAAARIIELYKASAFEEIQHNLNEYGYDIRHYLHPKGTGITVSTEDSKTPNYTCYTLKEVIDYLKGLGRKGIEIQRYKGLGEMNADQLWDTTMNPEQRTLVRVSLKDAVEADHIFTMLMGEEVPPRREFIESHALSIRMSNLDI</sequence>
<reference key="1">
    <citation type="journal article" date="2000" name="Nucleic Acids Res.">
        <title>Genome sequences of Chlamydia trachomatis MoPn and Chlamydia pneumoniae AR39.</title>
        <authorList>
            <person name="Read T.D."/>
            <person name="Brunham R.C."/>
            <person name="Shen C."/>
            <person name="Gill S.R."/>
            <person name="Heidelberg J.F."/>
            <person name="White O."/>
            <person name="Hickey E.K."/>
            <person name="Peterson J.D."/>
            <person name="Utterback T.R."/>
            <person name="Berry K.J."/>
            <person name="Bass S."/>
            <person name="Linher K.D."/>
            <person name="Weidman J.F."/>
            <person name="Khouri H.M."/>
            <person name="Craven B."/>
            <person name="Bowman C."/>
            <person name="Dodson R.J."/>
            <person name="Gwinn M.L."/>
            <person name="Nelson W.C."/>
            <person name="DeBoy R.T."/>
            <person name="Kolonay J.F."/>
            <person name="McClarty G."/>
            <person name="Salzberg S.L."/>
            <person name="Eisen J.A."/>
            <person name="Fraser C.M."/>
        </authorList>
    </citation>
    <scope>NUCLEOTIDE SEQUENCE [LARGE SCALE GENOMIC DNA]</scope>
    <source>
        <strain>MoPn / Nigg</strain>
    </source>
</reference>
<protein>
    <recommendedName>
        <fullName evidence="1">DNA gyrase subunit B</fullName>
        <ecNumber evidence="1">5.6.2.2</ecNumber>
    </recommendedName>
</protein>
<name>GYRB_CHLMU</name>
<feature type="chain" id="PRO_0000145303" description="DNA gyrase subunit B">
    <location>
        <begin position="1"/>
        <end position="804"/>
    </location>
</feature>
<feature type="domain" description="Toprim" evidence="1">
    <location>
        <begin position="431"/>
        <end position="546"/>
    </location>
</feature>
<feature type="binding site" evidence="1">
    <location>
        <position position="437"/>
    </location>
    <ligand>
        <name>Mg(2+)</name>
        <dbReference type="ChEBI" id="CHEBI:18420"/>
        <label>1</label>
        <note>catalytic</note>
    </ligand>
</feature>
<feature type="binding site" evidence="1">
    <location>
        <position position="511"/>
    </location>
    <ligand>
        <name>Mg(2+)</name>
        <dbReference type="ChEBI" id="CHEBI:18420"/>
        <label>1</label>
        <note>catalytic</note>
    </ligand>
</feature>
<feature type="binding site" evidence="1">
    <location>
        <position position="511"/>
    </location>
    <ligand>
        <name>Mg(2+)</name>
        <dbReference type="ChEBI" id="CHEBI:18420"/>
        <label>2</label>
    </ligand>
</feature>
<feature type="binding site" evidence="1">
    <location>
        <position position="513"/>
    </location>
    <ligand>
        <name>Mg(2+)</name>
        <dbReference type="ChEBI" id="CHEBI:18420"/>
        <label>2</label>
    </ligand>
</feature>
<feature type="site" description="Interaction with DNA" evidence="1">
    <location>
        <position position="462"/>
    </location>
</feature>
<feature type="site" description="Interaction with DNA" evidence="1">
    <location>
        <position position="465"/>
    </location>
</feature>
<gene>
    <name evidence="1" type="primary">gyrB</name>
    <name type="ordered locus">TC_0462</name>
</gene>
<dbReference type="EC" id="5.6.2.2" evidence="1"/>
<dbReference type="EMBL" id="AE002160">
    <property type="protein sequence ID" value="AAF39313.1"/>
    <property type="molecule type" value="Genomic_DNA"/>
</dbReference>
<dbReference type="PIR" id="A81701">
    <property type="entry name" value="A81701"/>
</dbReference>
<dbReference type="RefSeq" id="WP_010230507.1">
    <property type="nucleotide sequence ID" value="NZ_CP063055.1"/>
</dbReference>
<dbReference type="SMR" id="Q9PKK3"/>
<dbReference type="GeneID" id="1245817"/>
<dbReference type="KEGG" id="cmu:TC_0462"/>
<dbReference type="eggNOG" id="COG0187">
    <property type="taxonomic scope" value="Bacteria"/>
</dbReference>
<dbReference type="HOGENOM" id="CLU_006146_4_1_0"/>
<dbReference type="OrthoDB" id="9802808at2"/>
<dbReference type="Proteomes" id="UP000000800">
    <property type="component" value="Chromosome"/>
</dbReference>
<dbReference type="GO" id="GO:0005694">
    <property type="term" value="C:chromosome"/>
    <property type="evidence" value="ECO:0007669"/>
    <property type="project" value="InterPro"/>
</dbReference>
<dbReference type="GO" id="GO:0005737">
    <property type="term" value="C:cytoplasm"/>
    <property type="evidence" value="ECO:0007669"/>
    <property type="project" value="UniProtKB-SubCell"/>
</dbReference>
<dbReference type="GO" id="GO:0005524">
    <property type="term" value="F:ATP binding"/>
    <property type="evidence" value="ECO:0007669"/>
    <property type="project" value="UniProtKB-UniRule"/>
</dbReference>
<dbReference type="GO" id="GO:0003677">
    <property type="term" value="F:DNA binding"/>
    <property type="evidence" value="ECO:0007669"/>
    <property type="project" value="UniProtKB-KW"/>
</dbReference>
<dbReference type="GO" id="GO:0003918">
    <property type="term" value="F:DNA topoisomerase type II (double strand cut, ATP-hydrolyzing) activity"/>
    <property type="evidence" value="ECO:0007669"/>
    <property type="project" value="UniProtKB-UniRule"/>
</dbReference>
<dbReference type="GO" id="GO:0046872">
    <property type="term" value="F:metal ion binding"/>
    <property type="evidence" value="ECO:0007669"/>
    <property type="project" value="UniProtKB-KW"/>
</dbReference>
<dbReference type="GO" id="GO:0006265">
    <property type="term" value="P:DNA topological change"/>
    <property type="evidence" value="ECO:0007669"/>
    <property type="project" value="UniProtKB-UniRule"/>
</dbReference>
<dbReference type="GO" id="GO:0006261">
    <property type="term" value="P:DNA-templated DNA replication"/>
    <property type="evidence" value="ECO:0007669"/>
    <property type="project" value="UniProtKB-UniRule"/>
</dbReference>
<dbReference type="CDD" id="cd16928">
    <property type="entry name" value="HATPase_GyrB-like"/>
    <property type="match status" value="1"/>
</dbReference>
<dbReference type="CDD" id="cd00822">
    <property type="entry name" value="TopoII_Trans_DNA_gyrase"/>
    <property type="match status" value="1"/>
</dbReference>
<dbReference type="CDD" id="cd03366">
    <property type="entry name" value="TOPRIM_TopoIIA_GyrB"/>
    <property type="match status" value="1"/>
</dbReference>
<dbReference type="FunFam" id="3.30.230.10:FF:000005">
    <property type="entry name" value="DNA gyrase subunit B"/>
    <property type="match status" value="1"/>
</dbReference>
<dbReference type="FunFam" id="3.30.565.10:FF:000002">
    <property type="entry name" value="DNA gyrase subunit B"/>
    <property type="match status" value="1"/>
</dbReference>
<dbReference type="FunFam" id="3.40.50.670:FF:000007">
    <property type="entry name" value="DNA gyrase subunit B"/>
    <property type="match status" value="1"/>
</dbReference>
<dbReference type="Gene3D" id="3.30.230.10">
    <property type="match status" value="1"/>
</dbReference>
<dbReference type="Gene3D" id="3.40.50.670">
    <property type="match status" value="2"/>
</dbReference>
<dbReference type="Gene3D" id="3.30.565.10">
    <property type="entry name" value="Histidine kinase-like ATPase, C-terminal domain"/>
    <property type="match status" value="1"/>
</dbReference>
<dbReference type="HAMAP" id="MF_01898">
    <property type="entry name" value="GyrB"/>
    <property type="match status" value="1"/>
</dbReference>
<dbReference type="InterPro" id="IPR002288">
    <property type="entry name" value="DNA_gyrase_B_C"/>
</dbReference>
<dbReference type="InterPro" id="IPR011557">
    <property type="entry name" value="GyrB"/>
</dbReference>
<dbReference type="InterPro" id="IPR036890">
    <property type="entry name" value="HATPase_C_sf"/>
</dbReference>
<dbReference type="InterPro" id="IPR020568">
    <property type="entry name" value="Ribosomal_Su5_D2-typ_SF"/>
</dbReference>
<dbReference type="InterPro" id="IPR014721">
    <property type="entry name" value="Ribsml_uS5_D2-typ_fold_subgr"/>
</dbReference>
<dbReference type="InterPro" id="IPR001241">
    <property type="entry name" value="Topo_IIA"/>
</dbReference>
<dbReference type="InterPro" id="IPR013760">
    <property type="entry name" value="Topo_IIA-like_dom_sf"/>
</dbReference>
<dbReference type="InterPro" id="IPR000565">
    <property type="entry name" value="Topo_IIA_B"/>
</dbReference>
<dbReference type="InterPro" id="IPR013759">
    <property type="entry name" value="Topo_IIA_B_C"/>
</dbReference>
<dbReference type="InterPro" id="IPR013506">
    <property type="entry name" value="Topo_IIA_bsu_dom2"/>
</dbReference>
<dbReference type="InterPro" id="IPR018522">
    <property type="entry name" value="TopoIIA_CS"/>
</dbReference>
<dbReference type="InterPro" id="IPR006171">
    <property type="entry name" value="TOPRIM_dom"/>
</dbReference>
<dbReference type="InterPro" id="IPR034160">
    <property type="entry name" value="TOPRIM_GyrB"/>
</dbReference>
<dbReference type="NCBIfam" id="TIGR01059">
    <property type="entry name" value="gyrB"/>
    <property type="match status" value="1"/>
</dbReference>
<dbReference type="NCBIfam" id="NF004189">
    <property type="entry name" value="PRK05644.1"/>
    <property type="match status" value="1"/>
</dbReference>
<dbReference type="NCBIfam" id="NF011501">
    <property type="entry name" value="PRK14939.1"/>
    <property type="match status" value="1"/>
</dbReference>
<dbReference type="PANTHER" id="PTHR45866:SF1">
    <property type="entry name" value="DNA GYRASE SUBUNIT B, MITOCHONDRIAL"/>
    <property type="match status" value="1"/>
</dbReference>
<dbReference type="PANTHER" id="PTHR45866">
    <property type="entry name" value="DNA GYRASE/TOPOISOMERASE SUBUNIT B"/>
    <property type="match status" value="1"/>
</dbReference>
<dbReference type="Pfam" id="PF00204">
    <property type="entry name" value="DNA_gyraseB"/>
    <property type="match status" value="1"/>
</dbReference>
<dbReference type="Pfam" id="PF00986">
    <property type="entry name" value="DNA_gyraseB_C"/>
    <property type="match status" value="1"/>
</dbReference>
<dbReference type="Pfam" id="PF02518">
    <property type="entry name" value="HATPase_c"/>
    <property type="match status" value="1"/>
</dbReference>
<dbReference type="Pfam" id="PF01751">
    <property type="entry name" value="Toprim"/>
    <property type="match status" value="1"/>
</dbReference>
<dbReference type="PRINTS" id="PR01159">
    <property type="entry name" value="DNAGYRASEB"/>
</dbReference>
<dbReference type="PRINTS" id="PR00418">
    <property type="entry name" value="TPI2FAMILY"/>
</dbReference>
<dbReference type="SMART" id="SM00387">
    <property type="entry name" value="HATPase_c"/>
    <property type="match status" value="1"/>
</dbReference>
<dbReference type="SMART" id="SM00433">
    <property type="entry name" value="TOP2c"/>
    <property type="match status" value="1"/>
</dbReference>
<dbReference type="SUPFAM" id="SSF55874">
    <property type="entry name" value="ATPase domain of HSP90 chaperone/DNA topoisomerase II/histidine kinase"/>
    <property type="match status" value="1"/>
</dbReference>
<dbReference type="SUPFAM" id="SSF54211">
    <property type="entry name" value="Ribosomal protein S5 domain 2-like"/>
    <property type="match status" value="1"/>
</dbReference>
<dbReference type="SUPFAM" id="SSF56719">
    <property type="entry name" value="Type II DNA topoisomerase"/>
    <property type="match status" value="1"/>
</dbReference>
<dbReference type="PROSITE" id="PS00177">
    <property type="entry name" value="TOPOISOMERASE_II"/>
    <property type="match status" value="1"/>
</dbReference>
<dbReference type="PROSITE" id="PS50880">
    <property type="entry name" value="TOPRIM"/>
    <property type="match status" value="1"/>
</dbReference>